<comment type="function">
    <text evidence="1">Ligates lysine onto the cytidine present at position 34 of the AUA codon-specific tRNA(Ile) that contains the anticodon CAU, in an ATP-dependent manner. Cytidine is converted to lysidine, thus changing the amino acid specificity of the tRNA from methionine to isoleucine.</text>
</comment>
<comment type="catalytic activity">
    <reaction evidence="1">
        <text>cytidine(34) in tRNA(Ile2) + L-lysine + ATP = lysidine(34) in tRNA(Ile2) + AMP + diphosphate + H(+)</text>
        <dbReference type="Rhea" id="RHEA:43744"/>
        <dbReference type="Rhea" id="RHEA-COMP:10625"/>
        <dbReference type="Rhea" id="RHEA-COMP:10670"/>
        <dbReference type="ChEBI" id="CHEBI:15378"/>
        <dbReference type="ChEBI" id="CHEBI:30616"/>
        <dbReference type="ChEBI" id="CHEBI:32551"/>
        <dbReference type="ChEBI" id="CHEBI:33019"/>
        <dbReference type="ChEBI" id="CHEBI:82748"/>
        <dbReference type="ChEBI" id="CHEBI:83665"/>
        <dbReference type="ChEBI" id="CHEBI:456215"/>
        <dbReference type="EC" id="6.3.4.19"/>
    </reaction>
</comment>
<comment type="subcellular location">
    <subcellularLocation>
        <location evidence="1">Cytoplasm</location>
    </subcellularLocation>
</comment>
<comment type="domain">
    <text>The N-terminal region contains the highly conserved SGGXDS motif, predicted to be a P-loop motif involved in ATP binding.</text>
</comment>
<comment type="similarity">
    <text evidence="1">Belongs to the tRNA(Ile)-lysidine synthase family.</text>
</comment>
<proteinExistence type="inferred from homology"/>
<organism>
    <name type="scientific">Rhodococcus opacus (strain B4)</name>
    <dbReference type="NCBI Taxonomy" id="632772"/>
    <lineage>
        <taxon>Bacteria</taxon>
        <taxon>Bacillati</taxon>
        <taxon>Actinomycetota</taxon>
        <taxon>Actinomycetes</taxon>
        <taxon>Mycobacteriales</taxon>
        <taxon>Nocardiaceae</taxon>
        <taxon>Rhodococcus</taxon>
    </lineage>
</organism>
<reference key="1">
    <citation type="submission" date="2009-03" db="EMBL/GenBank/DDBJ databases">
        <title>Comparison of the complete genome sequences of Rhodococcus erythropolis PR4 and Rhodococcus opacus B4.</title>
        <authorList>
            <person name="Takarada H."/>
            <person name="Sekine M."/>
            <person name="Hosoyama A."/>
            <person name="Yamada R."/>
            <person name="Fujisawa T."/>
            <person name="Omata S."/>
            <person name="Shimizu A."/>
            <person name="Tsukatani N."/>
            <person name="Tanikawa S."/>
            <person name="Fujita N."/>
            <person name="Harayama S."/>
        </authorList>
    </citation>
    <scope>NUCLEOTIDE SEQUENCE [LARGE SCALE GENOMIC DNA]</scope>
    <source>
        <strain>B4</strain>
    </source>
</reference>
<accession>C1BA63</accession>
<evidence type="ECO:0000255" key="1">
    <source>
        <dbReference type="HAMAP-Rule" id="MF_01161"/>
    </source>
</evidence>
<gene>
    <name evidence="1" type="primary">tilS</name>
    <name type="ordered locus">ROP_43190</name>
</gene>
<name>TILS_RHOOB</name>
<dbReference type="EC" id="6.3.4.19" evidence="1"/>
<dbReference type="EMBL" id="AP011115">
    <property type="protein sequence ID" value="BAH52566.1"/>
    <property type="molecule type" value="Genomic_DNA"/>
</dbReference>
<dbReference type="RefSeq" id="WP_012691495.1">
    <property type="nucleotide sequence ID" value="NC_012522.1"/>
</dbReference>
<dbReference type="SMR" id="C1BA63"/>
<dbReference type="STRING" id="632772.ROP_43190"/>
<dbReference type="KEGG" id="rop:ROP_43190"/>
<dbReference type="PATRIC" id="fig|632772.20.peg.4524"/>
<dbReference type="HOGENOM" id="CLU_018869_1_1_11"/>
<dbReference type="OrthoDB" id="5244702at2"/>
<dbReference type="Proteomes" id="UP000002212">
    <property type="component" value="Chromosome"/>
</dbReference>
<dbReference type="GO" id="GO:0005737">
    <property type="term" value="C:cytoplasm"/>
    <property type="evidence" value="ECO:0007669"/>
    <property type="project" value="UniProtKB-SubCell"/>
</dbReference>
<dbReference type="GO" id="GO:0005524">
    <property type="term" value="F:ATP binding"/>
    <property type="evidence" value="ECO:0007669"/>
    <property type="project" value="UniProtKB-UniRule"/>
</dbReference>
<dbReference type="GO" id="GO:0032267">
    <property type="term" value="F:tRNA(Ile)-lysidine synthase activity"/>
    <property type="evidence" value="ECO:0007669"/>
    <property type="project" value="UniProtKB-EC"/>
</dbReference>
<dbReference type="GO" id="GO:0006400">
    <property type="term" value="P:tRNA modification"/>
    <property type="evidence" value="ECO:0007669"/>
    <property type="project" value="UniProtKB-UniRule"/>
</dbReference>
<dbReference type="CDD" id="cd01992">
    <property type="entry name" value="TilS_N"/>
    <property type="match status" value="1"/>
</dbReference>
<dbReference type="Gene3D" id="1.20.59.20">
    <property type="match status" value="1"/>
</dbReference>
<dbReference type="Gene3D" id="3.40.50.620">
    <property type="entry name" value="HUPs"/>
    <property type="match status" value="1"/>
</dbReference>
<dbReference type="HAMAP" id="MF_01161">
    <property type="entry name" value="tRNA_Ile_lys_synt"/>
    <property type="match status" value="1"/>
</dbReference>
<dbReference type="InterPro" id="IPR014729">
    <property type="entry name" value="Rossmann-like_a/b/a_fold"/>
</dbReference>
<dbReference type="InterPro" id="IPR011063">
    <property type="entry name" value="TilS/TtcA_N"/>
</dbReference>
<dbReference type="InterPro" id="IPR012094">
    <property type="entry name" value="tRNA_Ile_lys_synt"/>
</dbReference>
<dbReference type="InterPro" id="IPR012795">
    <property type="entry name" value="tRNA_Ile_lys_synt_N"/>
</dbReference>
<dbReference type="InterPro" id="IPR015262">
    <property type="entry name" value="tRNA_Ile_lys_synt_subst-bd"/>
</dbReference>
<dbReference type="NCBIfam" id="TIGR02432">
    <property type="entry name" value="lysidine_TilS_N"/>
    <property type="match status" value="1"/>
</dbReference>
<dbReference type="PANTHER" id="PTHR43033">
    <property type="entry name" value="TRNA(ILE)-LYSIDINE SYNTHASE-RELATED"/>
    <property type="match status" value="1"/>
</dbReference>
<dbReference type="PANTHER" id="PTHR43033:SF1">
    <property type="entry name" value="TRNA(ILE)-LYSIDINE SYNTHASE-RELATED"/>
    <property type="match status" value="1"/>
</dbReference>
<dbReference type="Pfam" id="PF01171">
    <property type="entry name" value="ATP_bind_3"/>
    <property type="match status" value="1"/>
</dbReference>
<dbReference type="Pfam" id="PF09179">
    <property type="entry name" value="TilS"/>
    <property type="match status" value="1"/>
</dbReference>
<dbReference type="SUPFAM" id="SSF52402">
    <property type="entry name" value="Adenine nucleotide alpha hydrolases-like"/>
    <property type="match status" value="1"/>
</dbReference>
<dbReference type="SUPFAM" id="SSF82829">
    <property type="entry name" value="MesJ substrate recognition domain-like"/>
    <property type="match status" value="1"/>
</dbReference>
<feature type="chain" id="PRO_1000164325" description="tRNA(Ile)-lysidine synthase">
    <location>
        <begin position="1"/>
        <end position="325"/>
    </location>
</feature>
<feature type="binding site" evidence="1">
    <location>
        <begin position="34"/>
        <end position="39"/>
    </location>
    <ligand>
        <name>ATP</name>
        <dbReference type="ChEBI" id="CHEBI:30616"/>
    </ligand>
</feature>
<protein>
    <recommendedName>
        <fullName evidence="1">tRNA(Ile)-lysidine synthase</fullName>
        <ecNumber evidence="1">6.3.4.19</ecNumber>
    </recommendedName>
    <alternativeName>
        <fullName evidence="1">tRNA(Ile)-2-lysyl-cytidine synthase</fullName>
    </alternativeName>
    <alternativeName>
        <fullName evidence="1">tRNA(Ile)-lysidine synthetase</fullName>
    </alternativeName>
</protein>
<keyword id="KW-0067">ATP-binding</keyword>
<keyword id="KW-0963">Cytoplasm</keyword>
<keyword id="KW-0436">Ligase</keyword>
<keyword id="KW-0547">Nucleotide-binding</keyword>
<keyword id="KW-0819">tRNA processing</keyword>
<sequence>MLLPEEPAILEVRHAVRHWIAAHAPDGDVAVALSGGADSLALTAAAAVEARSAVALVVDHRLQRGSADVADGAAARARTLGCASAEVLPVDVTGSGGLEAAARQARYEALDAGRGTRPVLLGHTLDDQAETVLLGLSRGSGGRSIWGMSPYDSPWGRPLLGVRRAVTRQACTELGLDPHEDPHNSSPDFVRVRLRTEVLPLLEDVLGGGVAGALARTGEHLREEGAVLDAVAADAEAKVVVDGEIDAALLALSAPPVRRRVLRSWLLAAGARGLGDTQLRAVDDLVARWRGQGQVAVGGGTPDARLVVRRRRGRLNVGLDDRRRV</sequence>